<keyword id="KW-0025">Alternative splicing</keyword>
<keyword id="KW-1003">Cell membrane</keyword>
<keyword id="KW-0254">Endocytosis</keyword>
<keyword id="KW-0256">Endoplasmic reticulum</keyword>
<keyword id="KW-0472">Membrane</keyword>
<keyword id="KW-0675">Receptor</keyword>
<keyword id="KW-1185">Reference proteome</keyword>
<keyword id="KW-0812">Transmembrane</keyword>
<keyword id="KW-1133">Transmembrane helix</keyword>
<keyword id="KW-0879">Wnt signaling pathway</keyword>
<gene>
    <name type="primary">Lmbr1l</name>
    <name type="synonym">D15Ertd735e</name>
    <name type="synonym">Kiaa1174</name>
</gene>
<proteinExistence type="evidence at protein level"/>
<dbReference type="EMBL" id="AY052398">
    <property type="protein sequence ID" value="AAL13076.1"/>
    <property type="molecule type" value="mRNA"/>
</dbReference>
<dbReference type="EMBL" id="AK173121">
    <property type="protein sequence ID" value="BAD32399.1"/>
    <property type="status" value="ALT_INIT"/>
    <property type="molecule type" value="mRNA"/>
</dbReference>
<dbReference type="EMBL" id="AK003656">
    <property type="protein sequence ID" value="BAB22919.1"/>
    <property type="molecule type" value="mRNA"/>
</dbReference>
<dbReference type="EMBL" id="AK030589">
    <property type="protein sequence ID" value="BAC27033.1"/>
    <property type="molecule type" value="mRNA"/>
</dbReference>
<dbReference type="EMBL" id="AK049110">
    <property type="protein sequence ID" value="BAC33547.1"/>
    <property type="molecule type" value="mRNA"/>
</dbReference>
<dbReference type="EMBL" id="AK143891">
    <property type="protein sequence ID" value="BAE25586.1"/>
    <property type="molecule type" value="mRNA"/>
</dbReference>
<dbReference type="EMBL" id="AK154968">
    <property type="protein sequence ID" value="BAE32960.1"/>
    <property type="molecule type" value="mRNA"/>
</dbReference>
<dbReference type="EMBL" id="AK170328">
    <property type="protein sequence ID" value="BAE41722.1"/>
    <property type="molecule type" value="mRNA"/>
</dbReference>
<dbReference type="EMBL" id="BC023397">
    <property type="protein sequence ID" value="AAH23397.1"/>
    <property type="molecule type" value="mRNA"/>
</dbReference>
<dbReference type="CCDS" id="CCDS27811.1">
    <molecule id="Q9D1E5-1"/>
</dbReference>
<dbReference type="RefSeq" id="NP_083374.1">
    <molecule id="Q9D1E5-1"/>
    <property type="nucleotide sequence ID" value="NM_029098.4"/>
</dbReference>
<dbReference type="FunCoup" id="Q9D1E5">
    <property type="interactions" value="1572"/>
</dbReference>
<dbReference type="STRING" id="10090.ENSMUSP00000023736"/>
<dbReference type="PhosphoSitePlus" id="Q9D1E5"/>
<dbReference type="PaxDb" id="10090-ENSMUSP00000023736"/>
<dbReference type="ProteomicsDB" id="290047">
    <molecule id="Q9D1E5-1"/>
</dbReference>
<dbReference type="ProteomicsDB" id="290048">
    <molecule id="Q9D1E5-2"/>
</dbReference>
<dbReference type="Antibodypedia" id="42857">
    <property type="antibodies" value="70 antibodies from 17 providers"/>
</dbReference>
<dbReference type="DNASU" id="74775"/>
<dbReference type="Ensembl" id="ENSMUST00000023736.10">
    <molecule id="Q9D1E5-1"/>
    <property type="protein sequence ID" value="ENSMUSP00000023736.9"/>
    <property type="gene ID" value="ENSMUSG00000022999.16"/>
</dbReference>
<dbReference type="GeneID" id="74775"/>
<dbReference type="KEGG" id="mmu:74775"/>
<dbReference type="UCSC" id="uc007xoi.1">
    <molecule id="Q9D1E5-1"/>
    <property type="organism name" value="mouse"/>
</dbReference>
<dbReference type="AGR" id="MGI:1289247"/>
<dbReference type="CTD" id="55716"/>
<dbReference type="MGI" id="MGI:1289247">
    <property type="gene designation" value="Lmbr1l"/>
</dbReference>
<dbReference type="VEuPathDB" id="HostDB:ENSMUSG00000022999"/>
<dbReference type="eggNOG" id="KOG3722">
    <property type="taxonomic scope" value="Eukaryota"/>
</dbReference>
<dbReference type="GeneTree" id="ENSGT00390000007809"/>
<dbReference type="HOGENOM" id="CLU_029445_1_0_1"/>
<dbReference type="InParanoid" id="Q9D1E5"/>
<dbReference type="OMA" id="QQRRTWW"/>
<dbReference type="OrthoDB" id="5596951at2759"/>
<dbReference type="PhylomeDB" id="Q9D1E5"/>
<dbReference type="TreeFam" id="TF313485"/>
<dbReference type="BioGRID-ORCS" id="74775">
    <property type="hits" value="6 hits in 77 CRISPR screens"/>
</dbReference>
<dbReference type="PRO" id="PR:Q9D1E5"/>
<dbReference type="Proteomes" id="UP000000589">
    <property type="component" value="Chromosome 15"/>
</dbReference>
<dbReference type="RNAct" id="Q9D1E5">
    <property type="molecule type" value="protein"/>
</dbReference>
<dbReference type="Bgee" id="ENSMUSG00000022999">
    <property type="expression patterns" value="Expressed in retinal neural layer and 136 other cell types or tissues"/>
</dbReference>
<dbReference type="GO" id="GO:0005789">
    <property type="term" value="C:endoplasmic reticulum membrane"/>
    <property type="evidence" value="ECO:0000314"/>
    <property type="project" value="UniProtKB"/>
</dbReference>
<dbReference type="GO" id="GO:0005886">
    <property type="term" value="C:plasma membrane"/>
    <property type="evidence" value="ECO:0007669"/>
    <property type="project" value="UniProtKB-SubCell"/>
</dbReference>
<dbReference type="GO" id="GO:0004888">
    <property type="term" value="F:transmembrane signaling receptor activity"/>
    <property type="evidence" value="ECO:0007669"/>
    <property type="project" value="Ensembl"/>
</dbReference>
<dbReference type="GO" id="GO:0060218">
    <property type="term" value="P:hematopoietic stem cell differentiation"/>
    <property type="evidence" value="ECO:0000315"/>
    <property type="project" value="UniProtKB"/>
</dbReference>
<dbReference type="GO" id="GO:0090090">
    <property type="term" value="P:negative regulation of canonical Wnt signaling pathway"/>
    <property type="evidence" value="ECO:0000315"/>
    <property type="project" value="UniProtKB"/>
</dbReference>
<dbReference type="GO" id="GO:0006898">
    <property type="term" value="P:receptor-mediated endocytosis"/>
    <property type="evidence" value="ECO:0007669"/>
    <property type="project" value="Ensembl"/>
</dbReference>
<dbReference type="GO" id="GO:0070231">
    <property type="term" value="P:T cell apoptotic process"/>
    <property type="evidence" value="ECO:0000315"/>
    <property type="project" value="UniProtKB"/>
</dbReference>
<dbReference type="GO" id="GO:0030217">
    <property type="term" value="P:T cell differentiation"/>
    <property type="evidence" value="ECO:0000315"/>
    <property type="project" value="UniProtKB"/>
</dbReference>
<dbReference type="GO" id="GO:0042098">
    <property type="term" value="P:T cell proliferation"/>
    <property type="evidence" value="ECO:0000315"/>
    <property type="project" value="UniProtKB"/>
</dbReference>
<dbReference type="GO" id="GO:0016055">
    <property type="term" value="P:Wnt signaling pathway"/>
    <property type="evidence" value="ECO:0007669"/>
    <property type="project" value="UniProtKB-KW"/>
</dbReference>
<dbReference type="InterPro" id="IPR008075">
    <property type="entry name" value="LIMR"/>
</dbReference>
<dbReference type="InterPro" id="IPR006876">
    <property type="entry name" value="LMBR1-like_membr_prot"/>
</dbReference>
<dbReference type="PANTHER" id="PTHR12625">
    <property type="entry name" value="LIPOCALIN-1 INTERACTING MEMBRANE RECEPTOR LIMR"/>
    <property type="match status" value="1"/>
</dbReference>
<dbReference type="PANTHER" id="PTHR12625:SF2">
    <property type="entry name" value="PROTEIN LMBR1L"/>
    <property type="match status" value="1"/>
</dbReference>
<dbReference type="Pfam" id="PF04791">
    <property type="entry name" value="LMBR1"/>
    <property type="match status" value="2"/>
</dbReference>
<dbReference type="PRINTS" id="PR01692">
    <property type="entry name" value="LIPOCALINIMR"/>
</dbReference>
<evidence type="ECO:0000250" key="1">
    <source>
        <dbReference type="UniProtKB" id="Q6UX01"/>
    </source>
</evidence>
<evidence type="ECO:0000255" key="2"/>
<evidence type="ECO:0000269" key="3">
    <source>
    </source>
</evidence>
<evidence type="ECO:0000303" key="4">
    <source>
    </source>
</evidence>
<evidence type="ECO:0000305" key="5"/>
<feature type="chain" id="PRO_0000053912" description="Protein LMBR1L">
    <location>
        <begin position="1"/>
        <end position="489"/>
    </location>
</feature>
<feature type="topological domain" description="Extracellular" evidence="2">
    <location>
        <begin position="1"/>
        <end position="21"/>
    </location>
</feature>
<feature type="transmembrane region" description="Helical" evidence="2">
    <location>
        <begin position="22"/>
        <end position="42"/>
    </location>
</feature>
<feature type="topological domain" description="Cytoplasmic" evidence="2">
    <location>
        <begin position="43"/>
        <end position="66"/>
    </location>
</feature>
<feature type="transmembrane region" description="Helical" evidence="2">
    <location>
        <begin position="67"/>
        <end position="87"/>
    </location>
</feature>
<feature type="topological domain" description="Extracellular" evidence="2">
    <location>
        <begin position="88"/>
        <end position="114"/>
    </location>
</feature>
<feature type="transmembrane region" description="Helical" evidence="2">
    <location>
        <begin position="115"/>
        <end position="135"/>
    </location>
</feature>
<feature type="topological domain" description="Cytoplasmic" evidence="2">
    <location>
        <begin position="136"/>
        <end position="154"/>
    </location>
</feature>
<feature type="transmembrane region" description="Helical" evidence="2">
    <location>
        <begin position="155"/>
        <end position="175"/>
    </location>
</feature>
<feature type="topological domain" description="Extracellular" evidence="2">
    <location>
        <begin position="176"/>
        <end position="196"/>
    </location>
</feature>
<feature type="transmembrane region" description="Helical" evidence="2">
    <location>
        <begin position="197"/>
        <end position="217"/>
    </location>
</feature>
<feature type="topological domain" description="Cytoplasmic" evidence="2">
    <location>
        <begin position="218"/>
        <end position="305"/>
    </location>
</feature>
<feature type="transmembrane region" description="Helical" evidence="2">
    <location>
        <begin position="306"/>
        <end position="326"/>
    </location>
</feature>
<feature type="topological domain" description="Extracellular" evidence="2">
    <location>
        <begin position="327"/>
        <end position="350"/>
    </location>
</feature>
<feature type="transmembrane region" description="Helical" evidence="2">
    <location>
        <begin position="351"/>
        <end position="371"/>
    </location>
</feature>
<feature type="topological domain" description="Cytoplasmic" evidence="2">
    <location>
        <begin position="372"/>
        <end position="388"/>
    </location>
</feature>
<feature type="transmembrane region" description="Helical" evidence="2">
    <location>
        <begin position="389"/>
        <end position="409"/>
    </location>
</feature>
<feature type="topological domain" description="Extracellular" evidence="2">
    <location>
        <begin position="410"/>
        <end position="431"/>
    </location>
</feature>
<feature type="transmembrane region" description="Helical" evidence="2">
    <location>
        <begin position="432"/>
        <end position="452"/>
    </location>
</feature>
<feature type="topological domain" description="Cytoplasmic" evidence="2">
    <location>
        <begin position="453"/>
        <end position="489"/>
    </location>
</feature>
<feature type="region of interest" description="LCN1-binding" evidence="1">
    <location>
        <begin position="1"/>
        <end position="76"/>
    </location>
</feature>
<feature type="region of interest" description="Interaction with LGB" evidence="1">
    <location>
        <begin position="1"/>
        <end position="59"/>
    </location>
</feature>
<feature type="splice variant" id="VSP_016897" description="In isoform 2." evidence="4">
    <location>
        <begin position="1"/>
        <end position="127"/>
    </location>
</feature>
<feature type="mutagenesis site" description="In st (strawberry phenotype); affected mice exhibit severe lymphopenia, failure of lymphocyte development, reduced natural killer (NK) cell function and impaired B-cell development." evidence="3">
    <location>
        <begin position="212"/>
        <end position="489"/>
    </location>
</feature>
<feature type="sequence conflict" description="In Ref. 3; BAE41722." evidence="5" ref="3">
    <original>S</original>
    <variation>G</variation>
    <location>
        <position position="88"/>
    </location>
</feature>
<feature type="sequence conflict" description="In Ref. 3; BAE41722." evidence="5" ref="3">
    <original>M</original>
    <variation>V</variation>
    <location>
        <position position="303"/>
    </location>
</feature>
<feature type="sequence conflict" description="In Ref. 3; BAE41722." evidence="5" ref="3">
    <original>V</original>
    <variation>A</variation>
    <location>
        <position position="357"/>
    </location>
</feature>
<sequence>MEAADYEVLSVREQLFHDRVRECIISILLFATLYILCHIFLTRFKKPAEFTTVDDEDATVNKIALELCTFTLAVALGAVLLLPFSIISNEVLLSLPRNYYIQWLNGSLIHGLWNLVFLFSNLSLVFLMPFAYFFTESEGFAGSRKGVLGRVYETVVMLILLTLLVLGMVWVASAIVDNDKASRESLYDFWEYYLPYLYSCISFLGVLLLLVCTPLGLARMFSVTGKLLVKPRLLEDLEEQLNCSAFEEAALTRRICNPTSCWLPLDMELLHRQVLALQAQRVLLEKRRKASAWQRNLGYPLAMLCLLVLTGLSVLIVAVHILELLIDEAAMPRGMQDAALGQASFSKLGSFGAIIQVVLIFYLMVSSVVGFYSSPLFGSLRPRWHDTSMTQIIGNCVCLLVLSSALPVFSRTLGLTRFDLLGDFGRFNWLGNFYIVFLYNAAFAGLTTLCLVKTFTAAVRAELIRAFGLDRLPLPVSGFPRASRKKQHQ</sequence>
<name>LMBRL_MOUSE</name>
<accession>Q9D1E5</accession>
<accession>Q3TD82</accession>
<accession>Q69ZP7</accession>
<organism>
    <name type="scientific">Mus musculus</name>
    <name type="common">Mouse</name>
    <dbReference type="NCBI Taxonomy" id="10090"/>
    <lineage>
        <taxon>Eukaryota</taxon>
        <taxon>Metazoa</taxon>
        <taxon>Chordata</taxon>
        <taxon>Craniata</taxon>
        <taxon>Vertebrata</taxon>
        <taxon>Euteleostomi</taxon>
        <taxon>Mammalia</taxon>
        <taxon>Eutheria</taxon>
        <taxon>Euarchontoglires</taxon>
        <taxon>Glires</taxon>
        <taxon>Rodentia</taxon>
        <taxon>Myomorpha</taxon>
        <taxon>Muroidea</taxon>
        <taxon>Muridae</taxon>
        <taxon>Murinae</taxon>
        <taxon>Mus</taxon>
        <taxon>Mus</taxon>
    </lineage>
</organism>
<reference key="1">
    <citation type="submission" date="2001-08" db="EMBL/GenBank/DDBJ databases">
        <title>Mouse uteroglobin receptor.</title>
        <authorList>
            <person name="Mukherjee A.B."/>
            <person name="Zhang Z."/>
            <person name="Chowdhury B."/>
        </authorList>
    </citation>
    <scope>NUCLEOTIDE SEQUENCE [MRNA] (ISOFORM 1)</scope>
    <source>
        <strain>C57BL/6J</strain>
    </source>
</reference>
<reference key="2">
    <citation type="journal article" date="2004" name="DNA Res.">
        <title>Prediction of the coding sequences of mouse homologues of KIAA gene: IV. The complete nucleotide sequences of 500 mouse KIAA-homologous cDNAs identified by screening of terminal sequences of cDNA clones randomly sampled from size-fractionated libraries.</title>
        <authorList>
            <person name="Okazaki N."/>
            <person name="Kikuno R."/>
            <person name="Ohara R."/>
            <person name="Inamoto S."/>
            <person name="Koseki H."/>
            <person name="Hiraoka S."/>
            <person name="Saga Y."/>
            <person name="Seino S."/>
            <person name="Nishimura M."/>
            <person name="Kaisho T."/>
            <person name="Hoshino K."/>
            <person name="Kitamura H."/>
            <person name="Nagase T."/>
            <person name="Ohara O."/>
            <person name="Koga H."/>
        </authorList>
    </citation>
    <scope>NUCLEOTIDE SEQUENCE [LARGE SCALE MRNA] (ISOFORM 2)</scope>
</reference>
<reference key="3">
    <citation type="journal article" date="2005" name="Science">
        <title>The transcriptional landscape of the mammalian genome.</title>
        <authorList>
            <person name="Carninci P."/>
            <person name="Kasukawa T."/>
            <person name="Katayama S."/>
            <person name="Gough J."/>
            <person name="Frith M.C."/>
            <person name="Maeda N."/>
            <person name="Oyama R."/>
            <person name="Ravasi T."/>
            <person name="Lenhard B."/>
            <person name="Wells C."/>
            <person name="Kodzius R."/>
            <person name="Shimokawa K."/>
            <person name="Bajic V.B."/>
            <person name="Brenner S.E."/>
            <person name="Batalov S."/>
            <person name="Forrest A.R."/>
            <person name="Zavolan M."/>
            <person name="Davis M.J."/>
            <person name="Wilming L.G."/>
            <person name="Aidinis V."/>
            <person name="Allen J.E."/>
            <person name="Ambesi-Impiombato A."/>
            <person name="Apweiler R."/>
            <person name="Aturaliya R.N."/>
            <person name="Bailey T.L."/>
            <person name="Bansal M."/>
            <person name="Baxter L."/>
            <person name="Beisel K.W."/>
            <person name="Bersano T."/>
            <person name="Bono H."/>
            <person name="Chalk A.M."/>
            <person name="Chiu K.P."/>
            <person name="Choudhary V."/>
            <person name="Christoffels A."/>
            <person name="Clutterbuck D.R."/>
            <person name="Crowe M.L."/>
            <person name="Dalla E."/>
            <person name="Dalrymple B.P."/>
            <person name="de Bono B."/>
            <person name="Della Gatta G."/>
            <person name="di Bernardo D."/>
            <person name="Down T."/>
            <person name="Engstrom P."/>
            <person name="Fagiolini M."/>
            <person name="Faulkner G."/>
            <person name="Fletcher C.F."/>
            <person name="Fukushima T."/>
            <person name="Furuno M."/>
            <person name="Futaki S."/>
            <person name="Gariboldi M."/>
            <person name="Georgii-Hemming P."/>
            <person name="Gingeras T.R."/>
            <person name="Gojobori T."/>
            <person name="Green R.E."/>
            <person name="Gustincich S."/>
            <person name="Harbers M."/>
            <person name="Hayashi Y."/>
            <person name="Hensch T.K."/>
            <person name="Hirokawa N."/>
            <person name="Hill D."/>
            <person name="Huminiecki L."/>
            <person name="Iacono M."/>
            <person name="Ikeo K."/>
            <person name="Iwama A."/>
            <person name="Ishikawa T."/>
            <person name="Jakt M."/>
            <person name="Kanapin A."/>
            <person name="Katoh M."/>
            <person name="Kawasawa Y."/>
            <person name="Kelso J."/>
            <person name="Kitamura H."/>
            <person name="Kitano H."/>
            <person name="Kollias G."/>
            <person name="Krishnan S.P."/>
            <person name="Kruger A."/>
            <person name="Kummerfeld S.K."/>
            <person name="Kurochkin I.V."/>
            <person name="Lareau L.F."/>
            <person name="Lazarevic D."/>
            <person name="Lipovich L."/>
            <person name="Liu J."/>
            <person name="Liuni S."/>
            <person name="McWilliam S."/>
            <person name="Madan Babu M."/>
            <person name="Madera M."/>
            <person name="Marchionni L."/>
            <person name="Matsuda H."/>
            <person name="Matsuzawa S."/>
            <person name="Miki H."/>
            <person name="Mignone F."/>
            <person name="Miyake S."/>
            <person name="Morris K."/>
            <person name="Mottagui-Tabar S."/>
            <person name="Mulder N."/>
            <person name="Nakano N."/>
            <person name="Nakauchi H."/>
            <person name="Ng P."/>
            <person name="Nilsson R."/>
            <person name="Nishiguchi S."/>
            <person name="Nishikawa S."/>
            <person name="Nori F."/>
            <person name="Ohara O."/>
            <person name="Okazaki Y."/>
            <person name="Orlando V."/>
            <person name="Pang K.C."/>
            <person name="Pavan W.J."/>
            <person name="Pavesi G."/>
            <person name="Pesole G."/>
            <person name="Petrovsky N."/>
            <person name="Piazza S."/>
            <person name="Reed J."/>
            <person name="Reid J.F."/>
            <person name="Ring B.Z."/>
            <person name="Ringwald M."/>
            <person name="Rost B."/>
            <person name="Ruan Y."/>
            <person name="Salzberg S.L."/>
            <person name="Sandelin A."/>
            <person name="Schneider C."/>
            <person name="Schoenbach C."/>
            <person name="Sekiguchi K."/>
            <person name="Semple C.A."/>
            <person name="Seno S."/>
            <person name="Sessa L."/>
            <person name="Sheng Y."/>
            <person name="Shibata Y."/>
            <person name="Shimada H."/>
            <person name="Shimada K."/>
            <person name="Silva D."/>
            <person name="Sinclair B."/>
            <person name="Sperling S."/>
            <person name="Stupka E."/>
            <person name="Sugiura K."/>
            <person name="Sultana R."/>
            <person name="Takenaka Y."/>
            <person name="Taki K."/>
            <person name="Tammoja K."/>
            <person name="Tan S.L."/>
            <person name="Tang S."/>
            <person name="Taylor M.S."/>
            <person name="Tegner J."/>
            <person name="Teichmann S.A."/>
            <person name="Ueda H.R."/>
            <person name="van Nimwegen E."/>
            <person name="Verardo R."/>
            <person name="Wei C.L."/>
            <person name="Yagi K."/>
            <person name="Yamanishi H."/>
            <person name="Zabarovsky E."/>
            <person name="Zhu S."/>
            <person name="Zimmer A."/>
            <person name="Hide W."/>
            <person name="Bult C."/>
            <person name="Grimmond S.M."/>
            <person name="Teasdale R.D."/>
            <person name="Liu E.T."/>
            <person name="Brusic V."/>
            <person name="Quackenbush J."/>
            <person name="Wahlestedt C."/>
            <person name="Mattick J.S."/>
            <person name="Hume D.A."/>
            <person name="Kai C."/>
            <person name="Sasaki D."/>
            <person name="Tomaru Y."/>
            <person name="Fukuda S."/>
            <person name="Kanamori-Katayama M."/>
            <person name="Suzuki M."/>
            <person name="Aoki J."/>
            <person name="Arakawa T."/>
            <person name="Iida J."/>
            <person name="Imamura K."/>
            <person name="Itoh M."/>
            <person name="Kato T."/>
            <person name="Kawaji H."/>
            <person name="Kawagashira N."/>
            <person name="Kawashima T."/>
            <person name="Kojima M."/>
            <person name="Kondo S."/>
            <person name="Konno H."/>
            <person name="Nakano K."/>
            <person name="Ninomiya N."/>
            <person name="Nishio T."/>
            <person name="Okada M."/>
            <person name="Plessy C."/>
            <person name="Shibata K."/>
            <person name="Shiraki T."/>
            <person name="Suzuki S."/>
            <person name="Tagami M."/>
            <person name="Waki K."/>
            <person name="Watahiki A."/>
            <person name="Okamura-Oho Y."/>
            <person name="Suzuki H."/>
            <person name="Kawai J."/>
            <person name="Hayashizaki Y."/>
        </authorList>
    </citation>
    <scope>NUCLEOTIDE SEQUENCE [LARGE SCALE MRNA] (ISOFORM 1)</scope>
    <source>
        <strain>C57BL/6J</strain>
        <strain>NOD</strain>
        <tissue>Cerebellum</tissue>
        <tissue>Dendritic cell</tissue>
        <tissue>Embryo</tissue>
        <tissue>Kidney</tissue>
        <tissue>Pituitary</tissue>
        <tissue>Spleen</tissue>
    </source>
</reference>
<reference key="4">
    <citation type="journal article" date="2004" name="Genome Res.">
        <title>The status, quality, and expansion of the NIH full-length cDNA project: the Mammalian Gene Collection (MGC).</title>
        <authorList>
            <consortium name="The MGC Project Team"/>
        </authorList>
    </citation>
    <scope>NUCLEOTIDE SEQUENCE [LARGE SCALE MRNA] (ISOFORM 1)</scope>
    <source>
        <strain>FVB/N</strain>
        <tissue>Kidney</tissue>
    </source>
</reference>
<reference key="5">
    <citation type="journal article" date="2019" name="Science">
        <title>LMBR1L regulates lymphopoiesis through Wnt/beta-catenin signaling.</title>
        <authorList>
            <person name="Choi J.H."/>
            <person name="Zhong X."/>
            <person name="McAlpine W."/>
            <person name="Liao T.C."/>
            <person name="Zhang D."/>
            <person name="Fang B."/>
            <person name="Russell J."/>
            <person name="Ludwig S."/>
            <person name="Nair-Gill E."/>
            <person name="Zhang Z."/>
            <person name="Wang K.W."/>
            <person name="Misawa T."/>
            <person name="Zhan X."/>
            <person name="Choi M."/>
            <person name="Wang T."/>
            <person name="Li X."/>
            <person name="Tang M."/>
            <person name="Sun Q."/>
            <person name="Yu L."/>
            <person name="Murray A.R."/>
            <person name="Moresco E.M.Y."/>
            <person name="Beutler B."/>
        </authorList>
    </citation>
    <scope>FUNCTION</scope>
    <scope>SUBCELLULAR LOCATION</scope>
    <scope>DISRUPTION PHENOTYPE</scope>
    <scope>INTERACTION WITH UBAC2; FAF2; VCP; AMFR; ZNRF3; CTNNB1; LRP6; GSK3B; FZD6; DVL2 AND RNF43</scope>
    <scope>TISSUE SPECIFICITY</scope>
    <scope>MUTAGENESIS OF 212-CYS--GLN-489</scope>
</reference>
<protein>
    <recommendedName>
        <fullName>Protein LMBR1L</fullName>
    </recommendedName>
    <alternativeName>
        <fullName evidence="1">Lipocalin-1-interacting membrane receptor</fullName>
        <shortName evidence="1">LIMR</shortName>
    </alternativeName>
    <alternativeName>
        <fullName>Uteroglobin receptor</fullName>
    </alternativeName>
</protein>
<comment type="function">
    <text evidence="1 3">Plays an essential role in lymphocyte development by negatively regulating the canonical Wnt signaling pathway (PubMed:31073040). In association with UBAC2 and E3 ubiquitin-protein ligase AMFR, promotes the ubiquitin-mediated degradation of CTNNB1 and Wnt receptors FZD6 and LRP6 (PubMed:31073040). LMBR1L stabilizes the beta-catenin destruction complex that is required for regulating CTNNB1 levels (PubMed:31073040). Acts as a LCN1 receptor and can mediate its endocytosis (By similarity).</text>
</comment>
<comment type="subunit">
    <text evidence="1 3">Dimer (By similarity). Can also form higher oligomers (By similarity). Interacts with LCN1; this interaction mediates the endocytosis of LCN1 (By similarity). Interacts with UBAC2, FAF2, VCP, AMFR, ZNRF3, CTNNB1, LRP6, GSK3B, FZD6, DVL2 and RNF43 (PubMed:31073040). Interacts with GSK3A (By similarity). Interaction with LGB and SCGB1A1 is controversial (By similarity).</text>
</comment>
<comment type="subcellular location">
    <subcellularLocation>
        <location evidence="3">Cell membrane</location>
        <topology evidence="2">Multi-pass membrane protein</topology>
    </subcellularLocation>
    <subcellularLocation>
        <location evidence="3">Endoplasmic reticulum membrane</location>
        <topology evidence="2">Multi-pass membrane protein</topology>
    </subcellularLocation>
</comment>
<comment type="alternative products">
    <event type="alternative splicing"/>
    <isoform>
        <id>Q9D1E5-1</id>
        <name>1</name>
        <sequence type="displayed"/>
    </isoform>
    <isoform>
        <id>Q9D1E5-2</id>
        <name>2</name>
        <sequence type="described" ref="VSP_016897"/>
    </isoform>
</comment>
<comment type="tissue specificity">
    <text evidence="3">Highly expressed in the bone marrow, thymus, spleen and lymphocytes.</text>
</comment>
<comment type="disruption phenotype">
    <text evidence="3">Mice exhibit severely impaired development of all lymphoid lineages, compromised antibody responses to immunization, reduced cytotoxic T-cell killing activity and natural killer (NK) cell function, and resistance to cytomegalovirus infection (PubMed:31073040). T-cells are predisposed to apoptosis and die in response to antigen-specific or homeostatic expansion signals (PubMed:31073040). Impaired differentiation of hematopoietic stem cells into the lymphoid primed multipotent progenitor (LMPP) and common lymphoid progenitor populations that give rise to T-cells, B-cells, and NK cells (PubMed:31073040).</text>
</comment>
<comment type="similarity">
    <text evidence="5">Belongs to the LIMR family.</text>
</comment>
<comment type="sequence caution" evidence="5">
    <conflict type="erroneous initiation">
        <sequence resource="EMBL-CDS" id="BAD32399"/>
    </conflict>
</comment>